<comment type="function">
    <text evidence="1">Involved in the biosynthesis of the central metabolite phospho-alpha-D-ribosyl-1-pyrophosphate (PRPP) via the transfer of pyrophosphoryl group from ATP to 1-hydroxyl of ribose-5-phosphate (Rib-5-P).</text>
</comment>
<comment type="catalytic activity">
    <reaction evidence="1">
        <text>D-ribose 5-phosphate + ATP = 5-phospho-alpha-D-ribose 1-diphosphate + AMP + H(+)</text>
        <dbReference type="Rhea" id="RHEA:15609"/>
        <dbReference type="ChEBI" id="CHEBI:15378"/>
        <dbReference type="ChEBI" id="CHEBI:30616"/>
        <dbReference type="ChEBI" id="CHEBI:58017"/>
        <dbReference type="ChEBI" id="CHEBI:78346"/>
        <dbReference type="ChEBI" id="CHEBI:456215"/>
        <dbReference type="EC" id="2.7.6.1"/>
    </reaction>
</comment>
<comment type="cofactor">
    <cofactor evidence="1">
        <name>Mg(2+)</name>
        <dbReference type="ChEBI" id="CHEBI:18420"/>
    </cofactor>
    <text evidence="1">Binds 2 Mg(2+) ions per subunit.</text>
</comment>
<comment type="pathway">
    <text evidence="1">Metabolic intermediate biosynthesis; 5-phospho-alpha-D-ribose 1-diphosphate biosynthesis; 5-phospho-alpha-D-ribose 1-diphosphate from D-ribose 5-phosphate (route I): step 1/1.</text>
</comment>
<comment type="subunit">
    <text evidence="1">Homohexamer.</text>
</comment>
<comment type="subcellular location">
    <subcellularLocation>
        <location evidence="1">Cytoplasm</location>
    </subcellularLocation>
</comment>
<comment type="similarity">
    <text evidence="1">Belongs to the ribose-phosphate pyrophosphokinase family. Class I subfamily.</text>
</comment>
<dbReference type="EC" id="2.7.6.1" evidence="1"/>
<dbReference type="EMBL" id="AL939115">
    <property type="protein sequence ID" value="CAB95916.1"/>
    <property type="molecule type" value="Genomic_DNA"/>
</dbReference>
<dbReference type="RefSeq" id="NP_627340.1">
    <property type="nucleotide sequence ID" value="NC_003888.3"/>
</dbReference>
<dbReference type="RefSeq" id="WP_003975691.1">
    <property type="nucleotide sequence ID" value="NZ_VNID01000013.1"/>
</dbReference>
<dbReference type="SMR" id="Q9K3U0"/>
<dbReference type="FunCoup" id="Q9K3U0">
    <property type="interactions" value="514"/>
</dbReference>
<dbReference type="STRING" id="100226.gene:17760740"/>
<dbReference type="PaxDb" id="100226-SCO3123"/>
<dbReference type="KEGG" id="sco:SCO3123"/>
<dbReference type="PATRIC" id="fig|100226.15.peg.3187"/>
<dbReference type="eggNOG" id="COG0462">
    <property type="taxonomic scope" value="Bacteria"/>
</dbReference>
<dbReference type="HOGENOM" id="CLU_033546_2_0_11"/>
<dbReference type="InParanoid" id="Q9K3U0"/>
<dbReference type="OrthoDB" id="9777067at2"/>
<dbReference type="PhylomeDB" id="Q9K3U0"/>
<dbReference type="UniPathway" id="UPA00087">
    <property type="reaction ID" value="UER00172"/>
</dbReference>
<dbReference type="Proteomes" id="UP000001973">
    <property type="component" value="Chromosome"/>
</dbReference>
<dbReference type="GO" id="GO:0005737">
    <property type="term" value="C:cytoplasm"/>
    <property type="evidence" value="ECO:0000318"/>
    <property type="project" value="GO_Central"/>
</dbReference>
<dbReference type="GO" id="GO:0002189">
    <property type="term" value="C:ribose phosphate diphosphokinase complex"/>
    <property type="evidence" value="ECO:0000318"/>
    <property type="project" value="GO_Central"/>
</dbReference>
<dbReference type="GO" id="GO:0005524">
    <property type="term" value="F:ATP binding"/>
    <property type="evidence" value="ECO:0007669"/>
    <property type="project" value="UniProtKB-KW"/>
</dbReference>
<dbReference type="GO" id="GO:0016301">
    <property type="term" value="F:kinase activity"/>
    <property type="evidence" value="ECO:0007669"/>
    <property type="project" value="UniProtKB-KW"/>
</dbReference>
<dbReference type="GO" id="GO:0000287">
    <property type="term" value="F:magnesium ion binding"/>
    <property type="evidence" value="ECO:0007669"/>
    <property type="project" value="UniProtKB-UniRule"/>
</dbReference>
<dbReference type="GO" id="GO:0004749">
    <property type="term" value="F:ribose phosphate diphosphokinase activity"/>
    <property type="evidence" value="ECO:0000318"/>
    <property type="project" value="GO_Central"/>
</dbReference>
<dbReference type="GO" id="GO:0006015">
    <property type="term" value="P:5-phosphoribose 1-diphosphate biosynthetic process"/>
    <property type="evidence" value="ECO:0000318"/>
    <property type="project" value="GO_Central"/>
</dbReference>
<dbReference type="GO" id="GO:0006164">
    <property type="term" value="P:purine nucleotide biosynthetic process"/>
    <property type="evidence" value="ECO:0000318"/>
    <property type="project" value="GO_Central"/>
</dbReference>
<dbReference type="GO" id="GO:0009156">
    <property type="term" value="P:ribonucleoside monophosphate biosynthetic process"/>
    <property type="evidence" value="ECO:0007669"/>
    <property type="project" value="InterPro"/>
</dbReference>
<dbReference type="CDD" id="cd06223">
    <property type="entry name" value="PRTases_typeI"/>
    <property type="match status" value="1"/>
</dbReference>
<dbReference type="FunFam" id="3.40.50.2020:FF:000002">
    <property type="entry name" value="Ribose-phosphate pyrophosphokinase"/>
    <property type="match status" value="1"/>
</dbReference>
<dbReference type="FunFam" id="3.40.50.2020:FF:000014">
    <property type="entry name" value="Ribose-phosphate pyrophosphokinase 1"/>
    <property type="match status" value="1"/>
</dbReference>
<dbReference type="Gene3D" id="3.40.50.2020">
    <property type="match status" value="2"/>
</dbReference>
<dbReference type="HAMAP" id="MF_00583_B">
    <property type="entry name" value="RibP_PPkinase_B"/>
    <property type="match status" value="1"/>
</dbReference>
<dbReference type="InterPro" id="IPR000842">
    <property type="entry name" value="PRib_PP_synth_CS"/>
</dbReference>
<dbReference type="InterPro" id="IPR029099">
    <property type="entry name" value="Pribosyltran_N"/>
</dbReference>
<dbReference type="InterPro" id="IPR000836">
    <property type="entry name" value="PRibTrfase_dom"/>
</dbReference>
<dbReference type="InterPro" id="IPR029057">
    <property type="entry name" value="PRTase-like"/>
</dbReference>
<dbReference type="InterPro" id="IPR005946">
    <property type="entry name" value="Rib-P_diPkinase"/>
</dbReference>
<dbReference type="InterPro" id="IPR037515">
    <property type="entry name" value="Rib-P_diPkinase_bac"/>
</dbReference>
<dbReference type="NCBIfam" id="NF002320">
    <property type="entry name" value="PRK01259.1"/>
    <property type="match status" value="1"/>
</dbReference>
<dbReference type="NCBIfam" id="NF002844">
    <property type="entry name" value="PRK03092.1"/>
    <property type="match status" value="1"/>
</dbReference>
<dbReference type="NCBIfam" id="TIGR01251">
    <property type="entry name" value="ribP_PPkin"/>
    <property type="match status" value="1"/>
</dbReference>
<dbReference type="PANTHER" id="PTHR10210">
    <property type="entry name" value="RIBOSE-PHOSPHATE DIPHOSPHOKINASE FAMILY MEMBER"/>
    <property type="match status" value="1"/>
</dbReference>
<dbReference type="PANTHER" id="PTHR10210:SF41">
    <property type="entry name" value="RIBOSE-PHOSPHATE PYROPHOSPHOKINASE 1, CHLOROPLASTIC"/>
    <property type="match status" value="1"/>
</dbReference>
<dbReference type="Pfam" id="PF14572">
    <property type="entry name" value="Pribosyl_synth"/>
    <property type="match status" value="1"/>
</dbReference>
<dbReference type="Pfam" id="PF13793">
    <property type="entry name" value="Pribosyltran_N"/>
    <property type="match status" value="1"/>
</dbReference>
<dbReference type="SMART" id="SM01400">
    <property type="entry name" value="Pribosyltran_N"/>
    <property type="match status" value="1"/>
</dbReference>
<dbReference type="SUPFAM" id="SSF53271">
    <property type="entry name" value="PRTase-like"/>
    <property type="match status" value="1"/>
</dbReference>
<dbReference type="PROSITE" id="PS00114">
    <property type="entry name" value="PRPP_SYNTHASE"/>
    <property type="match status" value="1"/>
</dbReference>
<gene>
    <name evidence="1" type="primary">prs</name>
    <name type="ordered locus">SCO3123</name>
    <name type="ORF">SCE66.02</name>
</gene>
<accession>Q9K3U0</accession>
<evidence type="ECO:0000255" key="1">
    <source>
        <dbReference type="HAMAP-Rule" id="MF_00583"/>
    </source>
</evidence>
<proteinExistence type="inferred from homology"/>
<reference key="1">
    <citation type="journal article" date="2002" name="Nature">
        <title>Complete genome sequence of the model actinomycete Streptomyces coelicolor A3(2).</title>
        <authorList>
            <person name="Bentley S.D."/>
            <person name="Chater K.F."/>
            <person name="Cerdeno-Tarraga A.-M."/>
            <person name="Challis G.L."/>
            <person name="Thomson N.R."/>
            <person name="James K.D."/>
            <person name="Harris D.E."/>
            <person name="Quail M.A."/>
            <person name="Kieser H."/>
            <person name="Harper D."/>
            <person name="Bateman A."/>
            <person name="Brown S."/>
            <person name="Chandra G."/>
            <person name="Chen C.W."/>
            <person name="Collins M."/>
            <person name="Cronin A."/>
            <person name="Fraser A."/>
            <person name="Goble A."/>
            <person name="Hidalgo J."/>
            <person name="Hornsby T."/>
            <person name="Howarth S."/>
            <person name="Huang C.-H."/>
            <person name="Kieser T."/>
            <person name="Larke L."/>
            <person name="Murphy L.D."/>
            <person name="Oliver K."/>
            <person name="O'Neil S."/>
            <person name="Rabbinowitsch E."/>
            <person name="Rajandream M.A."/>
            <person name="Rutherford K.M."/>
            <person name="Rutter S."/>
            <person name="Seeger K."/>
            <person name="Saunders D."/>
            <person name="Sharp S."/>
            <person name="Squares R."/>
            <person name="Squares S."/>
            <person name="Taylor K."/>
            <person name="Warren T."/>
            <person name="Wietzorrek A."/>
            <person name="Woodward J.R."/>
            <person name="Barrell B.G."/>
            <person name="Parkhill J."/>
            <person name="Hopwood D.A."/>
        </authorList>
    </citation>
    <scope>NUCLEOTIDE SEQUENCE [LARGE SCALE GENOMIC DNA]</scope>
    <source>
        <strain>ATCC BAA-471 / A3(2) / M145</strain>
    </source>
</reference>
<sequence length="324" mass="35271">MTGIKTTGEKKMMFFSGRAHPELAEEVAQQLGVGVVPTKAFDFANGEIYVRYQESARGADCFLIQSHTAPINKWVMEQLIMIDALKRASARSITVIVPFYGYARQDKKHRGREPISARLIADLMKTAGADRILAVDLHTDQIQGFFDGPVDHLFALPLLADYVGAKVDRSKLTVVSPDAGRVRVADRWCDRLGAPLAIVHKRRDKDVANQVTVHEVVGDVKGRICVLVDDMIDTGGTICAAADALFAHGAEDVIVTATHGVLSGPAADRLKNSKVSEFVFTNTLPSASELELDKITVLSIAPTIARAVREVFEDGSVTSLFDEQ</sequence>
<feature type="chain" id="PRO_0000141201" description="Ribose-phosphate pyrophosphokinase">
    <location>
        <begin position="1"/>
        <end position="324"/>
    </location>
</feature>
<feature type="active site" evidence="1">
    <location>
        <position position="201"/>
    </location>
</feature>
<feature type="binding site" evidence="1">
    <location>
        <begin position="45"/>
        <end position="47"/>
    </location>
    <ligand>
        <name>ATP</name>
        <dbReference type="ChEBI" id="CHEBI:30616"/>
    </ligand>
</feature>
<feature type="binding site" evidence="1">
    <location>
        <begin position="104"/>
        <end position="105"/>
    </location>
    <ligand>
        <name>ATP</name>
        <dbReference type="ChEBI" id="CHEBI:30616"/>
    </ligand>
</feature>
<feature type="binding site" evidence="1">
    <location>
        <position position="138"/>
    </location>
    <ligand>
        <name>Mg(2+)</name>
        <dbReference type="ChEBI" id="CHEBI:18420"/>
        <label>1</label>
    </ligand>
</feature>
<feature type="binding site" evidence="1">
    <location>
        <position position="178"/>
    </location>
    <ligand>
        <name>Mg(2+)</name>
        <dbReference type="ChEBI" id="CHEBI:18420"/>
        <label>2</label>
    </ligand>
</feature>
<feature type="binding site" evidence="1">
    <location>
        <position position="203"/>
    </location>
    <ligand>
        <name>D-ribose 5-phosphate</name>
        <dbReference type="ChEBI" id="CHEBI:78346"/>
    </ligand>
</feature>
<feature type="binding site" evidence="1">
    <location>
        <position position="229"/>
    </location>
    <ligand>
        <name>D-ribose 5-phosphate</name>
        <dbReference type="ChEBI" id="CHEBI:78346"/>
    </ligand>
</feature>
<feature type="binding site" evidence="1">
    <location>
        <begin position="233"/>
        <end position="237"/>
    </location>
    <ligand>
        <name>D-ribose 5-phosphate</name>
        <dbReference type="ChEBI" id="CHEBI:78346"/>
    </ligand>
</feature>
<name>KPRS_STRCO</name>
<organism>
    <name type="scientific">Streptomyces coelicolor (strain ATCC BAA-471 / A3(2) / M145)</name>
    <dbReference type="NCBI Taxonomy" id="100226"/>
    <lineage>
        <taxon>Bacteria</taxon>
        <taxon>Bacillati</taxon>
        <taxon>Actinomycetota</taxon>
        <taxon>Actinomycetes</taxon>
        <taxon>Kitasatosporales</taxon>
        <taxon>Streptomycetaceae</taxon>
        <taxon>Streptomyces</taxon>
        <taxon>Streptomyces albidoflavus group</taxon>
    </lineage>
</organism>
<keyword id="KW-0067">ATP-binding</keyword>
<keyword id="KW-0963">Cytoplasm</keyword>
<keyword id="KW-0418">Kinase</keyword>
<keyword id="KW-0460">Magnesium</keyword>
<keyword id="KW-0479">Metal-binding</keyword>
<keyword id="KW-0545">Nucleotide biosynthesis</keyword>
<keyword id="KW-0547">Nucleotide-binding</keyword>
<keyword id="KW-1185">Reference proteome</keyword>
<keyword id="KW-0808">Transferase</keyword>
<protein>
    <recommendedName>
        <fullName evidence="1">Ribose-phosphate pyrophosphokinase</fullName>
        <shortName evidence="1">RPPK</shortName>
        <ecNumber evidence="1">2.7.6.1</ecNumber>
    </recommendedName>
    <alternativeName>
        <fullName evidence="1">5-phospho-D-ribosyl alpha-1-diphosphate synthase 2</fullName>
    </alternativeName>
    <alternativeName>
        <fullName evidence="1">Phosphoribosyl diphosphate synthase</fullName>
    </alternativeName>
    <alternativeName>
        <fullName evidence="1">Phosphoribosyl pyrophosphate synthase</fullName>
        <shortName evidence="1">P-Rib-PP synthase</shortName>
        <shortName evidence="1">PRPP synthase</shortName>
        <shortName evidence="1">PRPPase</shortName>
    </alternativeName>
</protein>